<proteinExistence type="inferred from homology"/>
<protein>
    <recommendedName>
        <fullName>ATP synthase subunit f, mitochondrial</fullName>
    </recommendedName>
</protein>
<comment type="function">
    <text>Mitochondrial membrane ATP synthase (F(1)F(0) ATP synthase or Complex V) produces ATP from ADP in the presence of a proton gradient across the membrane which is generated by electron transport complexes of the respiratory chain. F-type ATPases consist of two structural domains, F(1) - containing the extramembraneous catalytic core and F(0) - containing the membrane proton channel, linked together by a central stalk and a peripheral stalk. During catalysis, ATP synthesis in the catalytic domain of F(1) is coupled via a rotary mechanism of the central stalk subunits to proton translocation.</text>
</comment>
<comment type="subcellular location">
    <subcellularLocation>
        <location>Mitochondrion</location>
    </subcellularLocation>
    <subcellularLocation>
        <location>Mitochondrion inner membrane</location>
    </subcellularLocation>
</comment>
<comment type="similarity">
    <text evidence="2">Belongs to the ATPase F chain family.</text>
</comment>
<keyword id="KW-0066">ATP synthesis</keyword>
<keyword id="KW-0138">CF(0)</keyword>
<keyword id="KW-0375">Hydrogen ion transport</keyword>
<keyword id="KW-0406">Ion transport</keyword>
<keyword id="KW-0472">Membrane</keyword>
<keyword id="KW-0496">Mitochondrion</keyword>
<keyword id="KW-0999">Mitochondrion inner membrane</keyword>
<keyword id="KW-1185">Reference proteome</keyword>
<keyword id="KW-0809">Transit peptide</keyword>
<keyword id="KW-0813">Transport</keyword>
<organism>
    <name type="scientific">Schizosaccharomyces pombe (strain 972 / ATCC 24843)</name>
    <name type="common">Fission yeast</name>
    <dbReference type="NCBI Taxonomy" id="284812"/>
    <lineage>
        <taxon>Eukaryota</taxon>
        <taxon>Fungi</taxon>
        <taxon>Dikarya</taxon>
        <taxon>Ascomycota</taxon>
        <taxon>Taphrinomycotina</taxon>
        <taxon>Schizosaccharomycetes</taxon>
        <taxon>Schizosaccharomycetales</taxon>
        <taxon>Schizosaccharomycetaceae</taxon>
        <taxon>Schizosaccharomyces</taxon>
    </lineage>
</organism>
<sequence>MAPFPLKSFIPPQVANPTALNAFPSSARMGRIVDFYSRLPHGPAPKKSSNSFFSWYYKKYLGKNASGAPLLHLVGAVLVFSYASEYYYHIRHHEEH</sequence>
<dbReference type="EMBL" id="CU329671">
    <property type="protein sequence ID" value="CAA22344.1"/>
    <property type="molecule type" value="Genomic_DNA"/>
</dbReference>
<dbReference type="PIR" id="T39503">
    <property type="entry name" value="T39503"/>
</dbReference>
<dbReference type="RefSeq" id="NP_596629.1">
    <property type="nucleotide sequence ID" value="NM_001022550.2"/>
</dbReference>
<dbReference type="SMR" id="O94377"/>
<dbReference type="ComplexPortal" id="CPX-25764">
    <property type="entry name" value="Mitochondrial proton translocating ATP synthase complex"/>
</dbReference>
<dbReference type="FunCoup" id="O94377">
    <property type="interactions" value="77"/>
</dbReference>
<dbReference type="STRING" id="284812.O94377"/>
<dbReference type="PaxDb" id="4896-SPBC1604.11.1"/>
<dbReference type="EnsemblFungi" id="SPBC1604.11.1">
    <property type="protein sequence ID" value="SPBC1604.11.1:pep"/>
    <property type="gene ID" value="SPBC1604.11"/>
</dbReference>
<dbReference type="GeneID" id="2539609"/>
<dbReference type="KEGG" id="spo:2539609"/>
<dbReference type="PomBase" id="SPBC1604.11">
    <property type="gene designation" value="atp17"/>
</dbReference>
<dbReference type="VEuPathDB" id="FungiDB:SPBC1604.11"/>
<dbReference type="eggNOG" id="ENOG502S739">
    <property type="taxonomic scope" value="Eukaryota"/>
</dbReference>
<dbReference type="HOGENOM" id="CLU_152700_1_0_1"/>
<dbReference type="InParanoid" id="O94377"/>
<dbReference type="OMA" id="TIDYQMH"/>
<dbReference type="PhylomeDB" id="O94377"/>
<dbReference type="PRO" id="PR:O94377"/>
<dbReference type="Proteomes" id="UP000002485">
    <property type="component" value="Chromosome II"/>
</dbReference>
<dbReference type="GO" id="GO:0099617">
    <property type="term" value="C:matrix side of mitochondrial inner membrane"/>
    <property type="evidence" value="ECO:0000305"/>
    <property type="project" value="PomBase"/>
</dbReference>
<dbReference type="GO" id="GO:0005739">
    <property type="term" value="C:mitochondrion"/>
    <property type="evidence" value="ECO:0007005"/>
    <property type="project" value="PomBase"/>
</dbReference>
<dbReference type="GO" id="GO:0045259">
    <property type="term" value="C:proton-transporting ATP synthase complex"/>
    <property type="evidence" value="ECO:0000250"/>
    <property type="project" value="PomBase"/>
</dbReference>
<dbReference type="GO" id="GO:0015986">
    <property type="term" value="P:proton motive force-driven ATP synthesis"/>
    <property type="evidence" value="ECO:0000318"/>
    <property type="project" value="GO_Central"/>
</dbReference>
<dbReference type="GO" id="GO:0042776">
    <property type="term" value="P:proton motive force-driven mitochondrial ATP synthesis"/>
    <property type="evidence" value="ECO:0000250"/>
    <property type="project" value="PomBase"/>
</dbReference>
<dbReference type="GO" id="GO:1902600">
    <property type="term" value="P:proton transmembrane transport"/>
    <property type="evidence" value="ECO:0007669"/>
    <property type="project" value="UniProtKB-KW"/>
</dbReference>
<dbReference type="InterPro" id="IPR019727">
    <property type="entry name" value="ATP_synth_F0_fsu_mt_fun"/>
</dbReference>
<dbReference type="PANTHER" id="PTHR28161">
    <property type="entry name" value="ATP SYNTHASE SUBUNIT F, MITOCHONDRIAL"/>
    <property type="match status" value="1"/>
</dbReference>
<dbReference type="PANTHER" id="PTHR28161:SF1">
    <property type="entry name" value="ATP SYNTHASE SUBUNIT F, MITOCHONDRIAL"/>
    <property type="match status" value="1"/>
</dbReference>
<dbReference type="Pfam" id="PF10791">
    <property type="entry name" value="F1F0-ATPsyn_F"/>
    <property type="match status" value="1"/>
</dbReference>
<name>ATPK_SCHPO</name>
<gene>
    <name type="primary">atp17</name>
    <name type="ORF">SPBC1604.11</name>
</gene>
<reference key="1">
    <citation type="journal article" date="2002" name="Nature">
        <title>The genome sequence of Schizosaccharomyces pombe.</title>
        <authorList>
            <person name="Wood V."/>
            <person name="Gwilliam R."/>
            <person name="Rajandream M.A."/>
            <person name="Lyne M.H."/>
            <person name="Lyne R."/>
            <person name="Stewart A."/>
            <person name="Sgouros J.G."/>
            <person name="Peat N."/>
            <person name="Hayles J."/>
            <person name="Baker S.G."/>
            <person name="Basham D."/>
            <person name="Bowman S."/>
            <person name="Brooks K."/>
            <person name="Brown D."/>
            <person name="Brown S."/>
            <person name="Chillingworth T."/>
            <person name="Churcher C.M."/>
            <person name="Collins M."/>
            <person name="Connor R."/>
            <person name="Cronin A."/>
            <person name="Davis P."/>
            <person name="Feltwell T."/>
            <person name="Fraser A."/>
            <person name="Gentles S."/>
            <person name="Goble A."/>
            <person name="Hamlin N."/>
            <person name="Harris D.E."/>
            <person name="Hidalgo J."/>
            <person name="Hodgson G."/>
            <person name="Holroyd S."/>
            <person name="Hornsby T."/>
            <person name="Howarth S."/>
            <person name="Huckle E.J."/>
            <person name="Hunt S."/>
            <person name="Jagels K."/>
            <person name="James K.D."/>
            <person name="Jones L."/>
            <person name="Jones M."/>
            <person name="Leather S."/>
            <person name="McDonald S."/>
            <person name="McLean J."/>
            <person name="Mooney P."/>
            <person name="Moule S."/>
            <person name="Mungall K.L."/>
            <person name="Murphy L.D."/>
            <person name="Niblett D."/>
            <person name="Odell C."/>
            <person name="Oliver K."/>
            <person name="O'Neil S."/>
            <person name="Pearson D."/>
            <person name="Quail M.A."/>
            <person name="Rabbinowitsch E."/>
            <person name="Rutherford K.M."/>
            <person name="Rutter S."/>
            <person name="Saunders D."/>
            <person name="Seeger K."/>
            <person name="Sharp S."/>
            <person name="Skelton J."/>
            <person name="Simmonds M.N."/>
            <person name="Squares R."/>
            <person name="Squares S."/>
            <person name="Stevens K."/>
            <person name="Taylor K."/>
            <person name="Taylor R.G."/>
            <person name="Tivey A."/>
            <person name="Walsh S.V."/>
            <person name="Warren T."/>
            <person name="Whitehead S."/>
            <person name="Woodward J.R."/>
            <person name="Volckaert G."/>
            <person name="Aert R."/>
            <person name="Robben J."/>
            <person name="Grymonprez B."/>
            <person name="Weltjens I."/>
            <person name="Vanstreels E."/>
            <person name="Rieger M."/>
            <person name="Schaefer M."/>
            <person name="Mueller-Auer S."/>
            <person name="Gabel C."/>
            <person name="Fuchs M."/>
            <person name="Duesterhoeft A."/>
            <person name="Fritzc C."/>
            <person name="Holzer E."/>
            <person name="Moestl D."/>
            <person name="Hilbert H."/>
            <person name="Borzym K."/>
            <person name="Langer I."/>
            <person name="Beck A."/>
            <person name="Lehrach H."/>
            <person name="Reinhardt R."/>
            <person name="Pohl T.M."/>
            <person name="Eger P."/>
            <person name="Zimmermann W."/>
            <person name="Wedler H."/>
            <person name="Wambutt R."/>
            <person name="Purnelle B."/>
            <person name="Goffeau A."/>
            <person name="Cadieu E."/>
            <person name="Dreano S."/>
            <person name="Gloux S."/>
            <person name="Lelaure V."/>
            <person name="Mottier S."/>
            <person name="Galibert F."/>
            <person name="Aves S.J."/>
            <person name="Xiang Z."/>
            <person name="Hunt C."/>
            <person name="Moore K."/>
            <person name="Hurst S.M."/>
            <person name="Lucas M."/>
            <person name="Rochet M."/>
            <person name="Gaillardin C."/>
            <person name="Tallada V.A."/>
            <person name="Garzon A."/>
            <person name="Thode G."/>
            <person name="Daga R.R."/>
            <person name="Cruzado L."/>
            <person name="Jimenez J."/>
            <person name="Sanchez M."/>
            <person name="del Rey F."/>
            <person name="Benito J."/>
            <person name="Dominguez A."/>
            <person name="Revuelta J.L."/>
            <person name="Moreno S."/>
            <person name="Armstrong J."/>
            <person name="Forsburg S.L."/>
            <person name="Cerutti L."/>
            <person name="Lowe T."/>
            <person name="McCombie W.R."/>
            <person name="Paulsen I."/>
            <person name="Potashkin J."/>
            <person name="Shpakovski G.V."/>
            <person name="Ussery D."/>
            <person name="Barrell B.G."/>
            <person name="Nurse P."/>
        </authorList>
    </citation>
    <scope>NUCLEOTIDE SEQUENCE [LARGE SCALE GENOMIC DNA]</scope>
    <source>
        <strain>972 / ATCC 24843</strain>
    </source>
</reference>
<feature type="transit peptide" description="Mitochondrion" evidence="1">
    <location>
        <begin position="1"/>
        <end status="unknown"/>
    </location>
</feature>
<feature type="chain" id="PRO_0000002636" description="ATP synthase subunit f, mitochondrial">
    <location>
        <begin status="unknown"/>
        <end position="96"/>
    </location>
</feature>
<accession>O94377</accession>
<evidence type="ECO:0000255" key="1"/>
<evidence type="ECO:0000305" key="2"/>